<keyword id="KW-0938">Abscisic acid signaling pathway</keyword>
<keyword id="KW-0067">ATP-binding</keyword>
<keyword id="KW-1003">Cell membrane</keyword>
<keyword id="KW-0325">Glycoprotein</keyword>
<keyword id="KW-0472">Membrane</keyword>
<keyword id="KW-0547">Nucleotide-binding</keyword>
<keyword id="KW-0597">Phosphoprotein</keyword>
<keyword id="KW-1185">Reference proteome</keyword>
<keyword id="KW-0677">Repeat</keyword>
<keyword id="KW-0812">Transmembrane</keyword>
<keyword id="KW-1133">Transmembrane helix</keyword>
<keyword id="KW-0813">Transport</keyword>
<accession>Q7PC88</accession>
<accession>O80878</accession>
<feature type="chain" id="PRO_0000234630" description="ABC transporter G family member 31">
    <location>
        <begin position="1"/>
        <end position="1426"/>
    </location>
</feature>
<feature type="transmembrane region" description="Helical" evidence="2">
    <location>
        <begin position="530"/>
        <end position="550"/>
    </location>
</feature>
<feature type="transmembrane region" description="Helical" evidence="2">
    <location>
        <begin position="569"/>
        <end position="589"/>
    </location>
</feature>
<feature type="transmembrane region" description="Helical" evidence="2">
    <location>
        <begin position="618"/>
        <end position="638"/>
    </location>
</feature>
<feature type="transmembrane region" description="Helical" evidence="2">
    <location>
        <begin position="649"/>
        <end position="669"/>
    </location>
</feature>
<feature type="transmembrane region" description="Helical" evidence="2">
    <location>
        <begin position="675"/>
        <end position="695"/>
    </location>
</feature>
<feature type="transmembrane region" description="Helical" evidence="2">
    <location>
        <begin position="760"/>
        <end position="780"/>
    </location>
</feature>
<feature type="transmembrane region" description="Helical" evidence="2">
    <location>
        <begin position="1172"/>
        <end position="1192"/>
    </location>
</feature>
<feature type="transmembrane region" description="Helical" evidence="2">
    <location>
        <begin position="1202"/>
        <end position="1222"/>
    </location>
</feature>
<feature type="transmembrane region" description="Helical" evidence="2">
    <location>
        <begin position="1258"/>
        <end position="1278"/>
    </location>
</feature>
<feature type="transmembrane region" description="Helical" evidence="2">
    <location>
        <begin position="1285"/>
        <end position="1305"/>
    </location>
</feature>
<feature type="transmembrane region" description="Helical" evidence="2">
    <location>
        <begin position="1315"/>
        <end position="1335"/>
    </location>
</feature>
<feature type="transmembrane region" description="Helical" evidence="2">
    <location>
        <begin position="1342"/>
        <end position="1362"/>
    </location>
</feature>
<feature type="transmembrane region" description="Helical" evidence="2">
    <location>
        <begin position="1396"/>
        <end position="1416"/>
    </location>
</feature>
<feature type="domain" description="ABC transporter 1" evidence="3">
    <location>
        <begin position="160"/>
        <end position="434"/>
    </location>
</feature>
<feature type="domain" description="ABC transmembrane type-2 1" evidence="2">
    <location>
        <begin position="512"/>
        <end position="725"/>
    </location>
</feature>
<feature type="domain" description="ABC transporter 2" evidence="3">
    <location>
        <begin position="826"/>
        <end position="1078"/>
    </location>
</feature>
<feature type="domain" description="ABC transmembrane type-2 2" evidence="2">
    <location>
        <begin position="1151"/>
        <end position="1365"/>
    </location>
</feature>
<feature type="binding site" evidence="3">
    <location>
        <begin position="193"/>
        <end position="200"/>
    </location>
    <ligand>
        <name>ATP</name>
        <dbReference type="ChEBI" id="CHEBI:30616"/>
        <label>1</label>
    </ligand>
</feature>
<feature type="binding site" evidence="3">
    <location>
        <begin position="871"/>
        <end position="878"/>
    </location>
    <ligand>
        <name>ATP</name>
        <dbReference type="ChEBI" id="CHEBI:30616"/>
        <label>2</label>
    </ligand>
</feature>
<feature type="modified residue" description="Phosphothreonine" evidence="14">
    <location>
        <position position="276"/>
    </location>
</feature>
<feature type="glycosylation site" description="N-linked (GlcNAc...) asparagine" evidence="4">
    <location>
        <position position="6"/>
    </location>
</feature>
<feature type="glycosylation site" description="N-linked (GlcNAc...) asparagine" evidence="4">
    <location>
        <position position="150"/>
    </location>
</feature>
<feature type="glycosylation site" description="N-linked (GlcNAc...) asparagine" evidence="4">
    <location>
        <position position="219"/>
    </location>
</feature>
<feature type="glycosylation site" description="N-linked (GlcNAc...) asparagine" evidence="4">
    <location>
        <position position="856"/>
    </location>
</feature>
<comment type="function">
    <text evidence="1 6 7">Together with ABCG25, export abscisic acid (ABA) from the endosperm to deliver it to the embryo via ABCG30 and ABCG40-mediated import to suppress radicle extension and subsequent embryonic growth (PubMed:26334616). Together with ABCG9, involved in pollen coat deposition of steryl glycosides required for pollen fitness (PubMed:24474628). May be a general defense protein (By similarity).</text>
</comment>
<comment type="catalytic activity">
    <reaction evidence="7">
        <text>abscisate(in) + ATP + H2O = abscisate(out) + ADP + phosphate + H(+)</text>
        <dbReference type="Rhea" id="RHEA:63932"/>
        <dbReference type="ChEBI" id="CHEBI:15377"/>
        <dbReference type="ChEBI" id="CHEBI:15378"/>
        <dbReference type="ChEBI" id="CHEBI:30616"/>
        <dbReference type="ChEBI" id="CHEBI:43474"/>
        <dbReference type="ChEBI" id="CHEBI:62432"/>
        <dbReference type="ChEBI" id="CHEBI:456216"/>
    </reaction>
    <physiologicalReaction direction="left-to-right" evidence="7">
        <dbReference type="Rhea" id="RHEA:63933"/>
    </physiologicalReaction>
</comment>
<comment type="subcellular location">
    <subcellularLocation>
        <location evidence="6 7">Cell membrane</location>
        <topology evidence="2">Multi-pass membrane protein</topology>
    </subcellularLocation>
</comment>
<comment type="tissue specificity">
    <text evidence="5 6 7">Expressed in seedlings, stems, leaves, siliques and inflorescence (PubMed:12430018, PubMed:24474628). In seeds, confined to the endosperm (PubMed:26334616). Highly expressed in the tapetum of anthers (PubMed:24474628).</text>
</comment>
<comment type="developmental stage">
    <text evidence="6">Expressed transiently during flower develoment in the anthers and developing siliques (specifically in the maternal tissues), mostly in the pollen and the tapetal cell layer during pollen maturation.</text>
</comment>
<comment type="induction">
    <text evidence="5">Induced by cycloheximide (CHX).</text>
</comment>
<comment type="disruption phenotype">
    <text evidence="6 7">Early seeds germination on imbibition without stratification, and reduced abscisic acid (ABA)-mediated inhibition of stratified seeds germination (PubMed:26334616). Pollen grains of the double mutant abcg9 abcg31 shrivel up and collapse upon exposure to dry air, and exhibit an immature coat containing reduced levels of steryl glycosides, thus leading to a low viability (PubMed:24474628).</text>
</comment>
<comment type="similarity">
    <text evidence="11">Belongs to the ABC transporter superfamily. ABCG family. PDR (TC 3.A.1.205) subfamily.</text>
</comment>
<comment type="sequence caution" evidence="11">
    <conflict type="erroneous gene model prediction">
        <sequence resource="EMBL-CDS" id="AAC31858"/>
    </conflict>
</comment>
<gene>
    <name evidence="10" type="primary">ABCG31</name>
    <name evidence="8 9" type="synonym">PDR3</name>
    <name evidence="12" type="ordered locus">At2g29940</name>
    <name evidence="13" type="ORF">F23F1.14</name>
</gene>
<evidence type="ECO:0000250" key="1"/>
<evidence type="ECO:0000255" key="2"/>
<evidence type="ECO:0000255" key="3">
    <source>
        <dbReference type="PROSITE-ProRule" id="PRU00434"/>
    </source>
</evidence>
<evidence type="ECO:0000255" key="4">
    <source>
        <dbReference type="PROSITE-ProRule" id="PRU00498"/>
    </source>
</evidence>
<evidence type="ECO:0000269" key="5">
    <source>
    </source>
</evidence>
<evidence type="ECO:0000269" key="6">
    <source>
    </source>
</evidence>
<evidence type="ECO:0000269" key="7">
    <source>
    </source>
</evidence>
<evidence type="ECO:0000303" key="8">
    <source>
    </source>
</evidence>
<evidence type="ECO:0000303" key="9">
    <source>
    </source>
</evidence>
<evidence type="ECO:0000303" key="10">
    <source>
    </source>
</evidence>
<evidence type="ECO:0000305" key="11"/>
<evidence type="ECO:0000312" key="12">
    <source>
        <dbReference type="Araport" id="AT2G29940"/>
    </source>
</evidence>
<evidence type="ECO:0000312" key="13">
    <source>
        <dbReference type="EMBL" id="AAC31858.1"/>
    </source>
</evidence>
<evidence type="ECO:0007744" key="14">
    <source>
    </source>
</evidence>
<protein>
    <recommendedName>
        <fullName evidence="10">ABC transporter G family member 31</fullName>
        <shortName evidence="10">ABC transporter ABCG.31</shortName>
        <shortName evidence="10">AtABCG31</shortName>
    </recommendedName>
    <alternativeName>
        <fullName evidence="10">Pleiotropic drug resistance protein 3</fullName>
        <shortName evidence="10">AtPDR3</shortName>
    </alternativeName>
</protein>
<sequence>MAAASNGSEYFEFDVETGRESFARPSNAETVEQDEEDLRWAAIGRLPSQRQGTHNAILRRSQTQTQTSGYADGNVVQTIDVKKLDRADREMLVRQALATSDQDNFKLLSAIKERLDRVGMEVPKIEVRFENLNIEADVQAGTRALPTLVNVSRDFFERCLSSLRIIKPRKHKLNILKDISGIIKPGRMTLLLGPPGSGKSTLLLALAGKLDKSLKKTGNITYNGENLNKFHVKRTSAYISQTDNHIAELTVRETLDFAARCQGASEGFAGYMKDLTRLEKERGIRPSSEIDAFMKAASVKGEKHSVSTDYVLKVLGLDVCSDTMVGNDMMRGVSGGQRKRVTTGEMTVGPRKTLFMDEISTGLDSSTTFQIVKCIRNFVHLMDATVLMALLQPAPETFDLFDDLILLSEGYMVYQGPREDVIAFFESLGFRLPPRKGVADFLQEVTSKKDQAQYWADPSKPYQFIPVSDIAAAFRNSKYGHAADSKLAAPFDKKSADPSALCRTKFAISGWENLKVCFVRELLLIKRHKFLYTFRTCQVGFVGLVTATVFLKTRLHPTSEQFGNEYLSCLFFGLVHMMFNGFSELPLMISRLPVFYKQRDNSFHPAWSWSIASWLLRVPYSVLEAVVWSGVVYFTVGLAPSAGRFFRYMLLLFSVHQMALGLFRMMASLARDMVIANTFGSAAILIVFLLGGFVIPKADIKPWWVWGFWVSPLSYGQRAIAVNEFTATRWMTPSAISDTTIGLNLLKLRSFPTNDYWYWIGIAVLIGYAILFNNVVTLALAYLNPLRKARAVVLDDPNEETALVADANQVISEKKGMILPFKPLTMTFHNVNYYVDMPKEMRSQGVPETRLQLLSNVSGVFSPGVLTALVGSSGAGKTTLMDVLAGRKTGGYTEGDIRISGHPKEQQTFARISGYVEQNDIHSPQVTVEESLWFSASLRLPKEITKEQKKEFVEQVMRLVELDTLRYALVGLPGTTGLSTEQRKRLTIAVELVANPSIIFMDEPTSGLDARAAAIVMRTVRNTVDTGRTVVCTIHQPSIDIFEAFDELLLMKRGGQVIYGGKLGTHSQVLVDYFQGINGVPPISSGYNPATWMLEVTTPALEEKYNMEFADLYKKSDQFREVEANIKQLSVPPEGSEPISFTSRYSQNQLSQFLLCLWKQNLVYWRSPEYNLVRLVFTTIAAFILGTVFWDIGSKRTSSQDLITVMGALYSACLFLGVSNASSVQPIVSIERTVFYREKAAGMYAPIPYAAAQGLVEIPYILTQTILYGVITYFTIGFERTFSKFVLYLVFMFLTFTYFTFYGMMAVGLTPNQHLAAVISSAFYSLWNLLSGFLVQKPLIPVWWIWFYYICPVAWTLQGVILSQLGDVESMINEPLFHGTVKEFIEYYFGYKPNMIGVSAAVLVGFCALFFSAFALSVKYLNFQRR</sequence>
<name>AB31G_ARATH</name>
<proteinExistence type="evidence at protein level"/>
<reference key="1">
    <citation type="journal article" date="1999" name="Nature">
        <title>Sequence and analysis of chromosome 2 of the plant Arabidopsis thaliana.</title>
        <authorList>
            <person name="Lin X."/>
            <person name="Kaul S."/>
            <person name="Rounsley S.D."/>
            <person name="Shea T.P."/>
            <person name="Benito M.-I."/>
            <person name="Town C.D."/>
            <person name="Fujii C.Y."/>
            <person name="Mason T.M."/>
            <person name="Bowman C.L."/>
            <person name="Barnstead M.E."/>
            <person name="Feldblyum T.V."/>
            <person name="Buell C.R."/>
            <person name="Ketchum K.A."/>
            <person name="Lee J.J."/>
            <person name="Ronning C.M."/>
            <person name="Koo H.L."/>
            <person name="Moffat K.S."/>
            <person name="Cronin L.A."/>
            <person name="Shen M."/>
            <person name="Pai G."/>
            <person name="Van Aken S."/>
            <person name="Umayam L."/>
            <person name="Tallon L.J."/>
            <person name="Gill J.E."/>
            <person name="Adams M.D."/>
            <person name="Carrera A.J."/>
            <person name="Creasy T.H."/>
            <person name="Goodman H.M."/>
            <person name="Somerville C.R."/>
            <person name="Copenhaver G.P."/>
            <person name="Preuss D."/>
            <person name="Nierman W.C."/>
            <person name="White O."/>
            <person name="Eisen J.A."/>
            <person name="Salzberg S.L."/>
            <person name="Fraser C.M."/>
            <person name="Venter J.C."/>
        </authorList>
    </citation>
    <scope>NUCLEOTIDE SEQUENCE [LARGE SCALE GENOMIC DNA]</scope>
    <source>
        <strain>cv. Columbia</strain>
    </source>
</reference>
<reference key="2">
    <citation type="journal article" date="2017" name="Plant J.">
        <title>Araport11: a complete reannotation of the Arabidopsis thaliana reference genome.</title>
        <authorList>
            <person name="Cheng C.Y."/>
            <person name="Krishnakumar V."/>
            <person name="Chan A.P."/>
            <person name="Thibaud-Nissen F."/>
            <person name="Schobel S."/>
            <person name="Town C.D."/>
        </authorList>
    </citation>
    <scope>GENOME REANNOTATION</scope>
    <source>
        <strain>cv. Columbia</strain>
    </source>
</reference>
<reference key="3">
    <citation type="journal article" date="2002" name="Planta">
        <title>The plant PDR family of ABC transporters.</title>
        <authorList>
            <person name="van den Brule S."/>
            <person name="Smart C.C."/>
        </authorList>
    </citation>
    <scope>IDENTIFICATION</scope>
    <scope>TISSUE SPECIFICITY</scope>
    <scope>INDUCTION</scope>
</reference>
<reference key="4">
    <citation type="journal article" date="2006" name="FEBS Lett.">
        <title>Organization and function of the plant pleiotropic drug resistance ABC transporter family.</title>
        <authorList>
            <person name="Crouzet J."/>
            <person name="Trombik T."/>
            <person name="Fraysse A.S."/>
            <person name="Boutry M."/>
        </authorList>
    </citation>
    <scope>GENE FAMILY</scope>
    <scope>NOMENCLATURE</scope>
</reference>
<reference key="5">
    <citation type="journal article" date="2008" name="Trends Plant Sci.">
        <title>Plant ABC proteins - a unified nomenclature and updated inventory.</title>
        <authorList>
            <person name="Verrier P.J."/>
            <person name="Bird D."/>
            <person name="Burla B."/>
            <person name="Dassa E."/>
            <person name="Forestier C."/>
            <person name="Geisler M."/>
            <person name="Klein M."/>
            <person name="Kolukisaoglu H.U."/>
            <person name="Lee Y."/>
            <person name="Martinoia E."/>
            <person name="Murphy A."/>
            <person name="Rea P.A."/>
            <person name="Samuels L."/>
            <person name="Schulz B."/>
            <person name="Spalding E.J."/>
            <person name="Yazaki K."/>
            <person name="Theodoulou F.L."/>
        </authorList>
    </citation>
    <scope>GENE FAMILY</scope>
    <scope>NOMENCLATURE</scope>
</reference>
<reference key="6">
    <citation type="journal article" date="2009" name="J. Proteomics">
        <title>Phosphoproteomic analysis of nuclei-enriched fractions from Arabidopsis thaliana.</title>
        <authorList>
            <person name="Jones A.M.E."/>
            <person name="MacLean D."/>
            <person name="Studholme D.J."/>
            <person name="Serna-Sanz A."/>
            <person name="Andreasson E."/>
            <person name="Rathjen J.P."/>
            <person name="Peck S.C."/>
        </authorList>
    </citation>
    <scope>PHOSPHORYLATION [LARGE SCALE ANALYSIS] AT THR-276</scope>
    <scope>IDENTIFICATION BY MASS SPECTROMETRY [LARGE SCALE ANALYSIS]</scope>
    <source>
        <strain>cv. Columbia</strain>
    </source>
</reference>
<reference key="7">
    <citation type="journal article" date="2014" name="Plant Cell">
        <title>The role of Arabidopsis ABCG9 and ABCG31 ATP binding cassette transporters in pollen fitness and the deposition of steryl glycosides on the pollen coat.</title>
        <authorList>
            <person name="Choi H."/>
            <person name="Ohyama K."/>
            <person name="Kim Y.-Y."/>
            <person name="Jin J.-Y."/>
            <person name="Lee S.B."/>
            <person name="Yamaoka Y."/>
            <person name="Muranaka T."/>
            <person name="Suh M.C."/>
            <person name="Fujioka S."/>
            <person name="Lee Y."/>
        </authorList>
    </citation>
    <scope>FUNCTION</scope>
    <scope>DISRUPTION PHENOTYPE</scope>
    <scope>TISSUE SPECIFICITY</scope>
    <scope>DEVELOPMENTAL STAGE</scope>
    <scope>SUBCELLULAR LOCATION</scope>
    <source>
        <strain>cv. Columbia</strain>
    </source>
</reference>
<reference key="8">
    <citation type="journal article" date="2015" name="Nat. Commun.">
        <title>Abscisic acid transporters cooperate to control seed germination.</title>
        <authorList>
            <person name="Kang J."/>
            <person name="Yim S."/>
            <person name="Choi H."/>
            <person name="Kim A."/>
            <person name="Lee K.P."/>
            <person name="Lopez-Molina L."/>
            <person name="Martinoia E."/>
            <person name="Lee Y."/>
        </authorList>
    </citation>
    <scope>FUNCTION</scope>
    <scope>DISRUPTION PHENOTYPE</scope>
    <scope>CATALYTIC ACTIVITY</scope>
    <scope>TISSUE SPECIFICITY</scope>
    <scope>SUBCELLULAR LOCATION</scope>
    <source>
        <strain>cv. Columbia</strain>
    </source>
</reference>
<organism>
    <name type="scientific">Arabidopsis thaliana</name>
    <name type="common">Mouse-ear cress</name>
    <dbReference type="NCBI Taxonomy" id="3702"/>
    <lineage>
        <taxon>Eukaryota</taxon>
        <taxon>Viridiplantae</taxon>
        <taxon>Streptophyta</taxon>
        <taxon>Embryophyta</taxon>
        <taxon>Tracheophyta</taxon>
        <taxon>Spermatophyta</taxon>
        <taxon>Magnoliopsida</taxon>
        <taxon>eudicotyledons</taxon>
        <taxon>Gunneridae</taxon>
        <taxon>Pentapetalae</taxon>
        <taxon>rosids</taxon>
        <taxon>malvids</taxon>
        <taxon>Brassicales</taxon>
        <taxon>Brassicaceae</taxon>
        <taxon>Camelineae</taxon>
        <taxon>Arabidopsis</taxon>
    </lineage>
</organism>
<dbReference type="EMBL" id="AC004680">
    <property type="protein sequence ID" value="AAC31858.1"/>
    <property type="status" value="ALT_SEQ"/>
    <property type="molecule type" value="Genomic_DNA"/>
</dbReference>
<dbReference type="EMBL" id="CP002685">
    <property type="protein sequence ID" value="AEC08325.1"/>
    <property type="molecule type" value="Genomic_DNA"/>
</dbReference>
<dbReference type="EMBL" id="BK001002">
    <property type="protein sequence ID" value="DAA00871.1"/>
    <property type="molecule type" value="Genomic_DNA"/>
</dbReference>
<dbReference type="PIR" id="T02491">
    <property type="entry name" value="T02491"/>
</dbReference>
<dbReference type="RefSeq" id="NP_180555.2">
    <property type="nucleotide sequence ID" value="NM_128548.4"/>
</dbReference>
<dbReference type="SMR" id="Q7PC88"/>
<dbReference type="FunCoup" id="Q7PC88">
    <property type="interactions" value="249"/>
</dbReference>
<dbReference type="STRING" id="3702.Q7PC88"/>
<dbReference type="GlyCosmos" id="Q7PC88">
    <property type="glycosylation" value="4 sites, No reported glycans"/>
</dbReference>
<dbReference type="GlyGen" id="Q7PC88">
    <property type="glycosylation" value="4 sites"/>
</dbReference>
<dbReference type="iPTMnet" id="Q7PC88"/>
<dbReference type="PaxDb" id="3702-AT2G29940.1"/>
<dbReference type="ProteomicsDB" id="244494"/>
<dbReference type="EnsemblPlants" id="AT2G29940.1">
    <property type="protein sequence ID" value="AT2G29940.1"/>
    <property type="gene ID" value="AT2G29940"/>
</dbReference>
<dbReference type="GeneID" id="817544"/>
<dbReference type="Gramene" id="AT2G29940.1">
    <property type="protein sequence ID" value="AT2G29940.1"/>
    <property type="gene ID" value="AT2G29940"/>
</dbReference>
<dbReference type="KEGG" id="ath:AT2G29940"/>
<dbReference type="Araport" id="AT2G29940"/>
<dbReference type="TAIR" id="AT2G29940">
    <property type="gene designation" value="ABCG31"/>
</dbReference>
<dbReference type="eggNOG" id="KOG0065">
    <property type="taxonomic scope" value="Eukaryota"/>
</dbReference>
<dbReference type="HOGENOM" id="CLU_000604_35_3_1"/>
<dbReference type="InParanoid" id="Q7PC88"/>
<dbReference type="OMA" id="QYWSDQS"/>
<dbReference type="PhylomeDB" id="Q7PC88"/>
<dbReference type="PRO" id="PR:Q7PC88"/>
<dbReference type="Proteomes" id="UP000006548">
    <property type="component" value="Chromosome 2"/>
</dbReference>
<dbReference type="ExpressionAtlas" id="Q7PC88">
    <property type="expression patterns" value="baseline and differential"/>
</dbReference>
<dbReference type="GO" id="GO:0005886">
    <property type="term" value="C:plasma membrane"/>
    <property type="evidence" value="ECO:0000314"/>
    <property type="project" value="UniProtKB"/>
</dbReference>
<dbReference type="GO" id="GO:0009506">
    <property type="term" value="C:plasmodesma"/>
    <property type="evidence" value="ECO:0007005"/>
    <property type="project" value="TAIR"/>
</dbReference>
<dbReference type="GO" id="GO:0070505">
    <property type="term" value="C:pollen coat"/>
    <property type="evidence" value="ECO:0000315"/>
    <property type="project" value="UniProtKB"/>
</dbReference>
<dbReference type="GO" id="GO:0140359">
    <property type="term" value="F:ABC-type transporter activity"/>
    <property type="evidence" value="ECO:0007669"/>
    <property type="project" value="InterPro"/>
</dbReference>
<dbReference type="GO" id="GO:0005524">
    <property type="term" value="F:ATP binding"/>
    <property type="evidence" value="ECO:0007669"/>
    <property type="project" value="UniProtKB-KW"/>
</dbReference>
<dbReference type="GO" id="GO:0016887">
    <property type="term" value="F:ATP hydrolysis activity"/>
    <property type="evidence" value="ECO:0007669"/>
    <property type="project" value="InterPro"/>
</dbReference>
<dbReference type="GO" id="GO:0042626">
    <property type="term" value="F:ATPase-coupled transmembrane transporter activity"/>
    <property type="evidence" value="ECO:0000315"/>
    <property type="project" value="UniProtKB"/>
</dbReference>
<dbReference type="GO" id="GO:0015562">
    <property type="term" value="F:efflux transmembrane transporter activity"/>
    <property type="evidence" value="ECO:0000315"/>
    <property type="project" value="UniProtKB"/>
</dbReference>
<dbReference type="GO" id="GO:0080168">
    <property type="term" value="P:abscisic acid transport"/>
    <property type="evidence" value="ECO:0000314"/>
    <property type="project" value="UniProtKB"/>
</dbReference>
<dbReference type="GO" id="GO:0009738">
    <property type="term" value="P:abscisic acid-activated signaling pathway"/>
    <property type="evidence" value="ECO:0000315"/>
    <property type="project" value="UniProtKB"/>
</dbReference>
<dbReference type="GO" id="GO:0140352">
    <property type="term" value="P:export from cell"/>
    <property type="evidence" value="ECO:0000315"/>
    <property type="project" value="UniProtKB"/>
</dbReference>
<dbReference type="GO" id="GO:1901656">
    <property type="term" value="P:glycoside transport"/>
    <property type="evidence" value="ECO:0000315"/>
    <property type="project" value="UniProtKB"/>
</dbReference>
<dbReference type="GO" id="GO:0010496">
    <property type="term" value="P:intercellular transport"/>
    <property type="evidence" value="ECO:0000315"/>
    <property type="project" value="UniProtKB"/>
</dbReference>
<dbReference type="GO" id="GO:0048581">
    <property type="term" value="P:negative regulation of post-embryonic development"/>
    <property type="evidence" value="ECO:0000315"/>
    <property type="project" value="UniProtKB"/>
</dbReference>
<dbReference type="GO" id="GO:0010208">
    <property type="term" value="P:pollen wall assembly"/>
    <property type="evidence" value="ECO:0000315"/>
    <property type="project" value="UniProtKB"/>
</dbReference>
<dbReference type="GO" id="GO:0055085">
    <property type="term" value="P:transmembrane transport"/>
    <property type="evidence" value="ECO:0000315"/>
    <property type="project" value="UniProtKB"/>
</dbReference>
<dbReference type="CDD" id="cd03233">
    <property type="entry name" value="ABCG_PDR_domain1"/>
    <property type="match status" value="1"/>
</dbReference>
<dbReference type="CDD" id="cd03232">
    <property type="entry name" value="ABCG_PDR_domain2"/>
    <property type="match status" value="1"/>
</dbReference>
<dbReference type="FunFam" id="3.40.50.300:FF:000179">
    <property type="entry name" value="ABC transporter G family member 34"/>
    <property type="match status" value="1"/>
</dbReference>
<dbReference type="FunFam" id="3.40.50.300:FF:000059">
    <property type="entry name" value="ABC transporter G family member 40"/>
    <property type="match status" value="1"/>
</dbReference>
<dbReference type="Gene3D" id="3.40.50.300">
    <property type="entry name" value="P-loop containing nucleotide triphosphate hydrolases"/>
    <property type="match status" value="2"/>
</dbReference>
<dbReference type="InterPro" id="IPR003593">
    <property type="entry name" value="AAA+_ATPase"/>
</dbReference>
<dbReference type="InterPro" id="IPR013525">
    <property type="entry name" value="ABC2_TM"/>
</dbReference>
<dbReference type="InterPro" id="IPR029481">
    <property type="entry name" value="ABC_trans_N"/>
</dbReference>
<dbReference type="InterPro" id="IPR003439">
    <property type="entry name" value="ABC_transporter-like_ATP-bd"/>
</dbReference>
<dbReference type="InterPro" id="IPR043926">
    <property type="entry name" value="ABCG_dom"/>
</dbReference>
<dbReference type="InterPro" id="IPR034001">
    <property type="entry name" value="ABCG_PDR_1"/>
</dbReference>
<dbReference type="InterPro" id="IPR034003">
    <property type="entry name" value="ABCG_PDR_2"/>
</dbReference>
<dbReference type="InterPro" id="IPR027417">
    <property type="entry name" value="P-loop_NTPase"/>
</dbReference>
<dbReference type="InterPro" id="IPR013581">
    <property type="entry name" value="PDR_assoc"/>
</dbReference>
<dbReference type="PANTHER" id="PTHR19241">
    <property type="entry name" value="ATP-BINDING CASSETTE TRANSPORTER"/>
    <property type="match status" value="1"/>
</dbReference>
<dbReference type="Pfam" id="PF01061">
    <property type="entry name" value="ABC2_membrane"/>
    <property type="match status" value="2"/>
</dbReference>
<dbReference type="Pfam" id="PF19055">
    <property type="entry name" value="ABC2_membrane_7"/>
    <property type="match status" value="1"/>
</dbReference>
<dbReference type="Pfam" id="PF00005">
    <property type="entry name" value="ABC_tran"/>
    <property type="match status" value="2"/>
</dbReference>
<dbReference type="Pfam" id="PF14510">
    <property type="entry name" value="ABC_trans_N"/>
    <property type="match status" value="1"/>
</dbReference>
<dbReference type="Pfam" id="PF08370">
    <property type="entry name" value="PDR_assoc"/>
    <property type="match status" value="1"/>
</dbReference>
<dbReference type="SMART" id="SM00382">
    <property type="entry name" value="AAA"/>
    <property type="match status" value="2"/>
</dbReference>
<dbReference type="SUPFAM" id="SSF52540">
    <property type="entry name" value="P-loop containing nucleoside triphosphate hydrolases"/>
    <property type="match status" value="2"/>
</dbReference>
<dbReference type="PROSITE" id="PS50893">
    <property type="entry name" value="ABC_TRANSPORTER_2"/>
    <property type="match status" value="2"/>
</dbReference>